<evidence type="ECO:0000250" key="1"/>
<evidence type="ECO:0000255" key="2"/>
<evidence type="ECO:0000255" key="3">
    <source>
        <dbReference type="PROSITE-ProRule" id="PRU00114"/>
    </source>
</evidence>
<evidence type="ECO:0000256" key="4">
    <source>
        <dbReference type="SAM" id="MobiDB-lite"/>
    </source>
</evidence>
<evidence type="ECO:0000269" key="5">
    <source>
    </source>
</evidence>
<protein>
    <recommendedName>
        <fullName>Fibroblast growth factor receptor-like 1</fullName>
    </recommendedName>
</protein>
<sequence length="487" mass="54099">MGLQLALLLAGIVALSDSARGPPRIADKVIHRQSVRLGRTIKLLCPVEGDPPPLTMWMKDGRTIHSGWTRFRILQQGLKIKEVESEDAGTYICKATNGFGSTNVNYTLIVIDDTSSGKNSQTPEGSNGEYEDHSGKQWAQPRFTQPAKMRRRVIARPVGSSIRLKCVASGNPRPDITWLKDNKPLMPHEIGENKKKKWTLNLKNLKPEDSGKYTCRVFNKVGEINATYKVEVIQRTRSKPILTGTHPVNTTVDYGGTTSFQCKVRSDVKPVIQWLKRVEYGTESKYNSTIDVGGQKFVVLPTGEVWSRPDGSYLNKLMITRAKEEDAGMYICLGANTMGYSFRSAFLTVLPDPKPPSAPVPPSSVSSLPWPVIIGIPAGAVFIFGTILLWLCQTKKKPCSPPAAAPVHRPQPRDRICVSQVPDKDCISSINYEEYVAQQQHLLSQGPALAPAMASKMYPKIYTDIHTHTHSHVEGKVHQHQHIQYQC</sequence>
<proteinExistence type="evidence at protein level"/>
<gene>
    <name type="primary">FGFRL1</name>
</gene>
<name>FGRL1_CHICK</name>
<keyword id="KW-1003">Cell membrane</keyword>
<keyword id="KW-1015">Disulfide bond</keyword>
<keyword id="KW-0325">Glycoprotein</keyword>
<keyword id="KW-0358">Heparin-binding</keyword>
<keyword id="KW-0393">Immunoglobulin domain</keyword>
<keyword id="KW-0472">Membrane</keyword>
<keyword id="KW-0675">Receptor</keyword>
<keyword id="KW-1185">Reference proteome</keyword>
<keyword id="KW-0677">Repeat</keyword>
<keyword id="KW-0732">Signal</keyword>
<keyword id="KW-0812">Transmembrane</keyword>
<keyword id="KW-1133">Transmembrane helix</keyword>
<organism>
    <name type="scientific">Gallus gallus</name>
    <name type="common">Chicken</name>
    <dbReference type="NCBI Taxonomy" id="9031"/>
    <lineage>
        <taxon>Eukaryota</taxon>
        <taxon>Metazoa</taxon>
        <taxon>Chordata</taxon>
        <taxon>Craniata</taxon>
        <taxon>Vertebrata</taxon>
        <taxon>Euteleostomi</taxon>
        <taxon>Archelosauria</taxon>
        <taxon>Archosauria</taxon>
        <taxon>Dinosauria</taxon>
        <taxon>Saurischia</taxon>
        <taxon>Theropoda</taxon>
        <taxon>Coelurosauria</taxon>
        <taxon>Aves</taxon>
        <taxon>Neognathae</taxon>
        <taxon>Galloanserae</taxon>
        <taxon>Galliformes</taxon>
        <taxon>Phasianidae</taxon>
        <taxon>Phasianinae</taxon>
        <taxon>Gallus</taxon>
    </lineage>
</organism>
<reference key="1">
    <citation type="journal article" date="2003" name="J. Biol. Chem.">
        <title>Characterization of FGFRL1, a novel fibroblast growth factor (FGF) receptor preferentially expressed in skeletal tissues.</title>
        <authorList>
            <person name="Trueb B."/>
            <person name="Zhuang L."/>
            <person name="Taeschler S."/>
            <person name="Wiedemann M."/>
        </authorList>
    </citation>
    <scope>NUCLEOTIDE SEQUENCE [MRNA]</scope>
    <scope>FUNCTION</scope>
    <scope>TISSUE SPECIFICITY</scope>
    <scope>INTERACTION WITH HEPARIN AND FGF2</scope>
    <source>
        <tissue>Cartilage</tissue>
    </source>
</reference>
<feature type="signal peptide" evidence="2">
    <location>
        <begin position="1"/>
        <end position="18"/>
    </location>
</feature>
<feature type="chain" id="PRO_0000021249" description="Fibroblast growth factor receptor-like 1">
    <location>
        <begin position="19"/>
        <end position="487"/>
    </location>
</feature>
<feature type="topological domain" description="Extracellular" evidence="2">
    <location>
        <begin position="19"/>
        <end position="371"/>
    </location>
</feature>
<feature type="transmembrane region" description="Helical" evidence="2">
    <location>
        <begin position="372"/>
        <end position="392"/>
    </location>
</feature>
<feature type="topological domain" description="Cytoplasmic" evidence="2">
    <location>
        <begin position="393"/>
        <end position="487"/>
    </location>
</feature>
<feature type="domain" description="Ig-like C2-type 1">
    <location>
        <begin position="23"/>
        <end position="109"/>
    </location>
</feature>
<feature type="domain" description="Ig-like C2-type 2">
    <location>
        <begin position="141"/>
        <end position="231"/>
    </location>
</feature>
<feature type="domain" description="Ig-like C2-type 3">
    <location>
        <begin position="240"/>
        <end position="348"/>
    </location>
</feature>
<feature type="region of interest" description="Disordered" evidence="4">
    <location>
        <begin position="115"/>
        <end position="147"/>
    </location>
</feature>
<feature type="compositionally biased region" description="Polar residues" evidence="4">
    <location>
        <begin position="115"/>
        <end position="125"/>
    </location>
</feature>
<feature type="glycosylation site" description="N-linked (GlcNAc...) asparagine" evidence="2">
    <location>
        <position position="105"/>
    </location>
</feature>
<feature type="glycosylation site" description="N-linked (GlcNAc...) asparagine" evidence="2">
    <location>
        <position position="225"/>
    </location>
</feature>
<feature type="glycosylation site" description="N-linked (GlcNAc...) asparagine" evidence="2">
    <location>
        <position position="249"/>
    </location>
</feature>
<feature type="glycosylation site" description="N-linked (GlcNAc...) asparagine" evidence="2">
    <location>
        <position position="287"/>
    </location>
</feature>
<feature type="disulfide bond" evidence="3">
    <location>
        <begin position="45"/>
        <end position="93"/>
    </location>
</feature>
<feature type="disulfide bond" evidence="3">
    <location>
        <begin position="166"/>
        <end position="215"/>
    </location>
</feature>
<feature type="disulfide bond" evidence="3">
    <location>
        <begin position="262"/>
        <end position="332"/>
    </location>
</feature>
<comment type="function">
    <text evidence="5">Has a negative effect on cell proliferation.</text>
</comment>
<comment type="subunit">
    <text evidence="5">Interacts with heparin and FGF2.</text>
</comment>
<comment type="subcellular location">
    <subcellularLocation>
        <location evidence="1">Cell membrane</location>
        <topology evidence="1">Single-pass type I membrane protein</topology>
    </subcellularLocation>
</comment>
<comment type="tissue specificity">
    <text evidence="5">Expressed in cartilaginous structures.</text>
</comment>
<dbReference type="EMBL" id="AJ535114">
    <property type="protein sequence ID" value="CAD59380.1"/>
    <property type="molecule type" value="mRNA"/>
</dbReference>
<dbReference type="RefSeq" id="NP_989787.1">
    <property type="nucleotide sequence ID" value="NM_204456.1"/>
</dbReference>
<dbReference type="SMR" id="Q7T2H2"/>
<dbReference type="FunCoup" id="Q7T2H2">
    <property type="interactions" value="218"/>
</dbReference>
<dbReference type="STRING" id="9031.ENSGALP00000057609"/>
<dbReference type="GlyCosmos" id="Q7T2H2">
    <property type="glycosylation" value="4 sites, No reported glycans"/>
</dbReference>
<dbReference type="GlyGen" id="Q7T2H2">
    <property type="glycosylation" value="4 sites"/>
</dbReference>
<dbReference type="PaxDb" id="9031-ENSGALP00000025315"/>
<dbReference type="GeneID" id="395107"/>
<dbReference type="KEGG" id="gga:395107"/>
<dbReference type="CTD" id="53834"/>
<dbReference type="VEuPathDB" id="HostDB:geneid_395107"/>
<dbReference type="eggNOG" id="KOG0200">
    <property type="taxonomic scope" value="Eukaryota"/>
</dbReference>
<dbReference type="HOGENOM" id="CLU_038830_1_0_1"/>
<dbReference type="InParanoid" id="Q7T2H2"/>
<dbReference type="OrthoDB" id="6244905at2759"/>
<dbReference type="PhylomeDB" id="Q7T2H2"/>
<dbReference type="Reactome" id="R-GGA-5658623">
    <property type="pathway name" value="FGFRL1 modulation of FGFR1 signaling"/>
</dbReference>
<dbReference type="PRO" id="PR:Q7T2H2"/>
<dbReference type="Proteomes" id="UP000000539">
    <property type="component" value="Chromosome 4"/>
</dbReference>
<dbReference type="Bgee" id="ENSGALG00000037525">
    <property type="expression patterns" value="Expressed in liver and 11 other cell types or tissues"/>
</dbReference>
<dbReference type="GO" id="GO:0005886">
    <property type="term" value="C:plasma membrane"/>
    <property type="evidence" value="ECO:0000318"/>
    <property type="project" value="GO_Central"/>
</dbReference>
<dbReference type="GO" id="GO:0017134">
    <property type="term" value="F:fibroblast growth factor binding"/>
    <property type="evidence" value="ECO:0000318"/>
    <property type="project" value="GO_Central"/>
</dbReference>
<dbReference type="GO" id="GO:0005007">
    <property type="term" value="F:fibroblast growth factor receptor activity"/>
    <property type="evidence" value="ECO:0000318"/>
    <property type="project" value="GO_Central"/>
</dbReference>
<dbReference type="GO" id="GO:0008201">
    <property type="term" value="F:heparin binding"/>
    <property type="evidence" value="ECO:0000314"/>
    <property type="project" value="UniProtKB"/>
</dbReference>
<dbReference type="GO" id="GO:0008285">
    <property type="term" value="P:negative regulation of cell population proliferation"/>
    <property type="evidence" value="ECO:0000314"/>
    <property type="project" value="UniProtKB"/>
</dbReference>
<dbReference type="CDD" id="cd05856">
    <property type="entry name" value="IgI_2_FGFRL1-like"/>
    <property type="match status" value="1"/>
</dbReference>
<dbReference type="FunFam" id="2.60.40.10:FF:000016">
    <property type="entry name" value="Fibroblast growth factor receptor"/>
    <property type="match status" value="1"/>
</dbReference>
<dbReference type="FunFam" id="2.60.40.10:FF:000246">
    <property type="entry name" value="Fibroblast growth factor receptor like 1"/>
    <property type="match status" value="1"/>
</dbReference>
<dbReference type="FunFam" id="2.60.40.10:FF:000593">
    <property type="entry name" value="Fibroblast growth factor receptor-like 1"/>
    <property type="match status" value="1"/>
</dbReference>
<dbReference type="Gene3D" id="2.60.40.10">
    <property type="entry name" value="Immunoglobulins"/>
    <property type="match status" value="3"/>
</dbReference>
<dbReference type="InterPro" id="IPR052615">
    <property type="entry name" value="FGFRL"/>
</dbReference>
<dbReference type="InterPro" id="IPR007110">
    <property type="entry name" value="Ig-like_dom"/>
</dbReference>
<dbReference type="InterPro" id="IPR036179">
    <property type="entry name" value="Ig-like_dom_sf"/>
</dbReference>
<dbReference type="InterPro" id="IPR013783">
    <property type="entry name" value="Ig-like_fold"/>
</dbReference>
<dbReference type="InterPro" id="IPR013098">
    <property type="entry name" value="Ig_I-set"/>
</dbReference>
<dbReference type="InterPro" id="IPR003599">
    <property type="entry name" value="Ig_sub"/>
</dbReference>
<dbReference type="InterPro" id="IPR003598">
    <property type="entry name" value="Ig_sub2"/>
</dbReference>
<dbReference type="PANTHER" id="PTHR19890">
    <property type="entry name" value="FIBROBLAST GROWTH FACTOR RECEPTOR"/>
    <property type="match status" value="1"/>
</dbReference>
<dbReference type="PANTHER" id="PTHR19890:SF10">
    <property type="entry name" value="FIBROBLAST GROWTH FACTOR RECEPTOR-LIKE 1"/>
    <property type="match status" value="1"/>
</dbReference>
<dbReference type="Pfam" id="PF07679">
    <property type="entry name" value="I-set"/>
    <property type="match status" value="2"/>
</dbReference>
<dbReference type="Pfam" id="PF13927">
    <property type="entry name" value="Ig_3"/>
    <property type="match status" value="1"/>
</dbReference>
<dbReference type="SMART" id="SM00409">
    <property type="entry name" value="IG"/>
    <property type="match status" value="3"/>
</dbReference>
<dbReference type="SMART" id="SM00408">
    <property type="entry name" value="IGc2"/>
    <property type="match status" value="3"/>
</dbReference>
<dbReference type="SUPFAM" id="SSF48726">
    <property type="entry name" value="Immunoglobulin"/>
    <property type="match status" value="3"/>
</dbReference>
<dbReference type="PROSITE" id="PS50835">
    <property type="entry name" value="IG_LIKE"/>
    <property type="match status" value="3"/>
</dbReference>
<accession>Q7T2H2</accession>